<dbReference type="EMBL" id="CP000086">
    <property type="protein sequence ID" value="ABC38681.1"/>
    <property type="status" value="ALT_INIT"/>
    <property type="molecule type" value="Genomic_DNA"/>
</dbReference>
<dbReference type="RefSeq" id="WP_009890438.1">
    <property type="nucleotide sequence ID" value="NZ_CP008785.1"/>
</dbReference>
<dbReference type="SMR" id="Q2SWZ8"/>
<dbReference type="GeneID" id="45121755"/>
<dbReference type="KEGG" id="bte:BTH_I2027"/>
<dbReference type="HOGENOM" id="CLU_040318_1_0_4"/>
<dbReference type="Proteomes" id="UP000001930">
    <property type="component" value="Chromosome I"/>
</dbReference>
<dbReference type="GO" id="GO:0022627">
    <property type="term" value="C:cytosolic small ribosomal subunit"/>
    <property type="evidence" value="ECO:0007669"/>
    <property type="project" value="TreeGrafter"/>
</dbReference>
<dbReference type="GO" id="GO:0003735">
    <property type="term" value="F:structural constituent of ribosome"/>
    <property type="evidence" value="ECO:0007669"/>
    <property type="project" value="InterPro"/>
</dbReference>
<dbReference type="GO" id="GO:0006412">
    <property type="term" value="P:translation"/>
    <property type="evidence" value="ECO:0007669"/>
    <property type="project" value="UniProtKB-UniRule"/>
</dbReference>
<dbReference type="CDD" id="cd01425">
    <property type="entry name" value="RPS2"/>
    <property type="match status" value="1"/>
</dbReference>
<dbReference type="FunFam" id="1.10.287.610:FF:000001">
    <property type="entry name" value="30S ribosomal protein S2"/>
    <property type="match status" value="1"/>
</dbReference>
<dbReference type="Gene3D" id="3.40.50.10490">
    <property type="entry name" value="Glucose-6-phosphate isomerase like protein, domain 1"/>
    <property type="match status" value="1"/>
</dbReference>
<dbReference type="Gene3D" id="1.10.287.610">
    <property type="entry name" value="Helix hairpin bin"/>
    <property type="match status" value="1"/>
</dbReference>
<dbReference type="HAMAP" id="MF_00291_B">
    <property type="entry name" value="Ribosomal_uS2_B"/>
    <property type="match status" value="1"/>
</dbReference>
<dbReference type="InterPro" id="IPR001865">
    <property type="entry name" value="Ribosomal_uS2"/>
</dbReference>
<dbReference type="InterPro" id="IPR005706">
    <property type="entry name" value="Ribosomal_uS2_bac/mit/plastid"/>
</dbReference>
<dbReference type="InterPro" id="IPR018130">
    <property type="entry name" value="Ribosomal_uS2_CS"/>
</dbReference>
<dbReference type="InterPro" id="IPR023591">
    <property type="entry name" value="Ribosomal_uS2_flav_dom_sf"/>
</dbReference>
<dbReference type="NCBIfam" id="TIGR01011">
    <property type="entry name" value="rpsB_bact"/>
    <property type="match status" value="1"/>
</dbReference>
<dbReference type="PANTHER" id="PTHR12534">
    <property type="entry name" value="30S RIBOSOMAL PROTEIN S2 PROKARYOTIC AND ORGANELLAR"/>
    <property type="match status" value="1"/>
</dbReference>
<dbReference type="PANTHER" id="PTHR12534:SF0">
    <property type="entry name" value="SMALL RIBOSOMAL SUBUNIT PROTEIN US2M"/>
    <property type="match status" value="1"/>
</dbReference>
<dbReference type="Pfam" id="PF00318">
    <property type="entry name" value="Ribosomal_S2"/>
    <property type="match status" value="1"/>
</dbReference>
<dbReference type="PRINTS" id="PR00395">
    <property type="entry name" value="RIBOSOMALS2"/>
</dbReference>
<dbReference type="SUPFAM" id="SSF52313">
    <property type="entry name" value="Ribosomal protein S2"/>
    <property type="match status" value="1"/>
</dbReference>
<dbReference type="PROSITE" id="PS00962">
    <property type="entry name" value="RIBOSOMAL_S2_1"/>
    <property type="match status" value="1"/>
</dbReference>
<accession>Q2SWZ8</accession>
<gene>
    <name evidence="1" type="primary">rpsB</name>
    <name type="ordered locus">BTH_I2027</name>
</gene>
<keyword id="KW-0687">Ribonucleoprotein</keyword>
<keyword id="KW-0689">Ribosomal protein</keyword>
<name>RS2_BURTA</name>
<feature type="chain" id="PRO_0000351983" description="Small ribosomal subunit protein uS2">
    <location>
        <begin position="1"/>
        <end position="246"/>
    </location>
</feature>
<sequence>MAVTMRQMLEAGVHFGHQTRFWNPKMAPFIFGHRNKIHIINLEKTLPMFNDAQKYVRQLAANRGTILFVGTKRQSRDTIAQEAQRAGMPYVNARWLGGMMTNFKTLKVSIKRLKDMEAAVEAGELEKMSKKEALLFEREIAKLQKSIGGVKDMGGIPDAIFVVDVGYHKIAVTEANKLGVPVIAVVDTNHSPEGVDYVIPGNDDSSKAVALYAEGVADAILEGRANAVNEVVQAVRGDDEYVEENA</sequence>
<proteinExistence type="inferred from homology"/>
<protein>
    <recommendedName>
        <fullName evidence="1">Small ribosomal subunit protein uS2</fullName>
    </recommendedName>
    <alternativeName>
        <fullName evidence="2">30S ribosomal protein S2</fullName>
    </alternativeName>
</protein>
<reference key="1">
    <citation type="journal article" date="2005" name="BMC Genomics">
        <title>Bacterial genome adaptation to niches: divergence of the potential virulence genes in three Burkholderia species of different survival strategies.</title>
        <authorList>
            <person name="Kim H.S."/>
            <person name="Schell M.A."/>
            <person name="Yu Y."/>
            <person name="Ulrich R.L."/>
            <person name="Sarria S.H."/>
            <person name="Nierman W.C."/>
            <person name="DeShazer D."/>
        </authorList>
    </citation>
    <scope>NUCLEOTIDE SEQUENCE [LARGE SCALE GENOMIC DNA]</scope>
    <source>
        <strain>ATCC 700388 / DSM 13276 / CCUG 48851 / CIP 106301 / E264</strain>
    </source>
</reference>
<comment type="similarity">
    <text evidence="1">Belongs to the universal ribosomal protein uS2 family.</text>
</comment>
<comment type="sequence caution" evidence="2">
    <conflict type="erroneous initiation">
        <sequence resource="EMBL-CDS" id="ABC38681"/>
    </conflict>
</comment>
<organism>
    <name type="scientific">Burkholderia thailandensis (strain ATCC 700388 / DSM 13276 / CCUG 48851 / CIP 106301 / E264)</name>
    <dbReference type="NCBI Taxonomy" id="271848"/>
    <lineage>
        <taxon>Bacteria</taxon>
        <taxon>Pseudomonadati</taxon>
        <taxon>Pseudomonadota</taxon>
        <taxon>Betaproteobacteria</taxon>
        <taxon>Burkholderiales</taxon>
        <taxon>Burkholderiaceae</taxon>
        <taxon>Burkholderia</taxon>
        <taxon>pseudomallei group</taxon>
    </lineage>
</organism>
<evidence type="ECO:0000255" key="1">
    <source>
        <dbReference type="HAMAP-Rule" id="MF_00291"/>
    </source>
</evidence>
<evidence type="ECO:0000305" key="2"/>